<feature type="chain" id="PRO_1000001749" description="Phosphate acyltransferase">
    <location>
        <begin position="1"/>
        <end position="332"/>
    </location>
</feature>
<name>PLSX_CLONN</name>
<dbReference type="EC" id="2.3.1.274" evidence="1"/>
<dbReference type="EMBL" id="CP000382">
    <property type="protein sequence ID" value="ABK61775.1"/>
    <property type="molecule type" value="Genomic_DNA"/>
</dbReference>
<dbReference type="RefSeq" id="WP_011722292.1">
    <property type="nucleotide sequence ID" value="NC_008593.1"/>
</dbReference>
<dbReference type="SMR" id="A0Q0Z2"/>
<dbReference type="STRING" id="386415.NT01CX_2221"/>
<dbReference type="KEGG" id="cno:NT01CX_2221"/>
<dbReference type="eggNOG" id="COG0416">
    <property type="taxonomic scope" value="Bacteria"/>
</dbReference>
<dbReference type="HOGENOM" id="CLU_039379_1_1_9"/>
<dbReference type="UniPathway" id="UPA00085"/>
<dbReference type="Proteomes" id="UP000008220">
    <property type="component" value="Chromosome"/>
</dbReference>
<dbReference type="GO" id="GO:0005737">
    <property type="term" value="C:cytoplasm"/>
    <property type="evidence" value="ECO:0007669"/>
    <property type="project" value="UniProtKB-SubCell"/>
</dbReference>
<dbReference type="GO" id="GO:0043811">
    <property type="term" value="F:phosphate:acyl-[acyl carrier protein] acyltransferase activity"/>
    <property type="evidence" value="ECO:0007669"/>
    <property type="project" value="UniProtKB-UniRule"/>
</dbReference>
<dbReference type="GO" id="GO:0006633">
    <property type="term" value="P:fatty acid biosynthetic process"/>
    <property type="evidence" value="ECO:0007669"/>
    <property type="project" value="UniProtKB-UniRule"/>
</dbReference>
<dbReference type="GO" id="GO:0008654">
    <property type="term" value="P:phospholipid biosynthetic process"/>
    <property type="evidence" value="ECO:0007669"/>
    <property type="project" value="UniProtKB-KW"/>
</dbReference>
<dbReference type="Gene3D" id="3.40.718.10">
    <property type="entry name" value="Isopropylmalate Dehydrogenase"/>
    <property type="match status" value="1"/>
</dbReference>
<dbReference type="HAMAP" id="MF_00019">
    <property type="entry name" value="PlsX"/>
    <property type="match status" value="1"/>
</dbReference>
<dbReference type="InterPro" id="IPR003664">
    <property type="entry name" value="FA_synthesis"/>
</dbReference>
<dbReference type="InterPro" id="IPR012281">
    <property type="entry name" value="Phospholipid_synth_PlsX-like"/>
</dbReference>
<dbReference type="NCBIfam" id="TIGR00182">
    <property type="entry name" value="plsX"/>
    <property type="match status" value="1"/>
</dbReference>
<dbReference type="PANTHER" id="PTHR30100">
    <property type="entry name" value="FATTY ACID/PHOSPHOLIPID SYNTHESIS PROTEIN PLSX"/>
    <property type="match status" value="1"/>
</dbReference>
<dbReference type="PANTHER" id="PTHR30100:SF1">
    <property type="entry name" value="PHOSPHATE ACYLTRANSFERASE"/>
    <property type="match status" value="1"/>
</dbReference>
<dbReference type="Pfam" id="PF02504">
    <property type="entry name" value="FA_synthesis"/>
    <property type="match status" value="1"/>
</dbReference>
<dbReference type="PIRSF" id="PIRSF002465">
    <property type="entry name" value="Phsphlp_syn_PlsX"/>
    <property type="match status" value="1"/>
</dbReference>
<dbReference type="SUPFAM" id="SSF53659">
    <property type="entry name" value="Isocitrate/Isopropylmalate dehydrogenase-like"/>
    <property type="match status" value="1"/>
</dbReference>
<gene>
    <name evidence="1" type="primary">plsX</name>
    <name type="ordered locus">NT01CX_2221</name>
</gene>
<reference key="1">
    <citation type="journal article" date="2006" name="Nat. Biotechnol.">
        <title>The genome and transcriptomes of the anti-tumor agent Clostridium novyi-NT.</title>
        <authorList>
            <person name="Bettegowda C."/>
            <person name="Huang X."/>
            <person name="Lin J."/>
            <person name="Cheong I."/>
            <person name="Kohli M."/>
            <person name="Szabo S.A."/>
            <person name="Zhang X."/>
            <person name="Diaz L.A. Jr."/>
            <person name="Velculescu V.E."/>
            <person name="Parmigiani G."/>
            <person name="Kinzler K.W."/>
            <person name="Vogelstein B."/>
            <person name="Zhou S."/>
        </authorList>
    </citation>
    <scope>NUCLEOTIDE SEQUENCE [LARGE SCALE GENOMIC DNA]</scope>
    <source>
        <strain>NT</strain>
    </source>
</reference>
<evidence type="ECO:0000255" key="1">
    <source>
        <dbReference type="HAMAP-Rule" id="MF_00019"/>
    </source>
</evidence>
<sequence>MKIVVDGMGGDYSPHIVVKGCIEAIKEYNNIDIIITGPEKLINDELQKYEYNKEKITVLDAKDVITNNEHPVMAIRRKKESSIYKALQMMKNKEADAVISAGSTGAFLAGATLVVGRIKGVSRPALAPIMPGKNGPFMIIDCGANAECKPSNLVQFAKMGEIYFENILNVKNPTVGLINIGSEEEKGNELTKEAHKLLKDMDFNFVGNVEPRDIPTGNTNVLVCDGFVGNTVLKMYEGVASTIFETLKDEIMSSFRTKIGGLLLKPVFKKFKKDYDYKEYGGAAFLGVDGICIKAHGSSDDKAFKNAIKQAINFYENGIIDKIKSHIEQKMI</sequence>
<keyword id="KW-0963">Cytoplasm</keyword>
<keyword id="KW-0444">Lipid biosynthesis</keyword>
<keyword id="KW-0443">Lipid metabolism</keyword>
<keyword id="KW-0594">Phospholipid biosynthesis</keyword>
<keyword id="KW-1208">Phospholipid metabolism</keyword>
<keyword id="KW-1185">Reference proteome</keyword>
<keyword id="KW-0808">Transferase</keyword>
<accession>A0Q0Z2</accession>
<proteinExistence type="inferred from homology"/>
<protein>
    <recommendedName>
        <fullName evidence="1">Phosphate acyltransferase</fullName>
        <ecNumber evidence="1">2.3.1.274</ecNumber>
    </recommendedName>
    <alternativeName>
        <fullName evidence="1">Acyl-ACP phosphotransacylase</fullName>
    </alternativeName>
    <alternativeName>
        <fullName evidence="1">Acyl-[acyl-carrier-protein]--phosphate acyltransferase</fullName>
    </alternativeName>
    <alternativeName>
        <fullName evidence="1">Phosphate-acyl-ACP acyltransferase</fullName>
    </alternativeName>
</protein>
<organism>
    <name type="scientific">Clostridium novyi (strain NT)</name>
    <dbReference type="NCBI Taxonomy" id="386415"/>
    <lineage>
        <taxon>Bacteria</taxon>
        <taxon>Bacillati</taxon>
        <taxon>Bacillota</taxon>
        <taxon>Clostridia</taxon>
        <taxon>Eubacteriales</taxon>
        <taxon>Clostridiaceae</taxon>
        <taxon>Clostridium</taxon>
    </lineage>
</organism>
<comment type="function">
    <text evidence="1">Catalyzes the reversible formation of acyl-phosphate (acyl-PO(4)) from acyl-[acyl-carrier-protein] (acyl-ACP). This enzyme utilizes acyl-ACP as fatty acyl donor, but not acyl-CoA.</text>
</comment>
<comment type="catalytic activity">
    <reaction evidence="1">
        <text>a fatty acyl-[ACP] + phosphate = an acyl phosphate + holo-[ACP]</text>
        <dbReference type="Rhea" id="RHEA:42292"/>
        <dbReference type="Rhea" id="RHEA-COMP:9685"/>
        <dbReference type="Rhea" id="RHEA-COMP:14125"/>
        <dbReference type="ChEBI" id="CHEBI:43474"/>
        <dbReference type="ChEBI" id="CHEBI:59918"/>
        <dbReference type="ChEBI" id="CHEBI:64479"/>
        <dbReference type="ChEBI" id="CHEBI:138651"/>
        <dbReference type="EC" id="2.3.1.274"/>
    </reaction>
</comment>
<comment type="pathway">
    <text evidence="1">Lipid metabolism; phospholipid metabolism.</text>
</comment>
<comment type="subunit">
    <text evidence="1">Homodimer. Probably interacts with PlsY.</text>
</comment>
<comment type="subcellular location">
    <subcellularLocation>
        <location evidence="1">Cytoplasm</location>
    </subcellularLocation>
    <text evidence="1">Associated with the membrane possibly through PlsY.</text>
</comment>
<comment type="similarity">
    <text evidence="1">Belongs to the PlsX family.</text>
</comment>